<evidence type="ECO:0000255" key="1">
    <source>
        <dbReference type="HAMAP-Rule" id="MF_00583"/>
    </source>
</evidence>
<evidence type="ECO:0000305" key="2"/>
<dbReference type="EC" id="2.7.6.1" evidence="1"/>
<dbReference type="EMBL" id="AE003849">
    <property type="protein sequence ID" value="AAF85441.1"/>
    <property type="status" value="ALT_INIT"/>
    <property type="molecule type" value="Genomic_DNA"/>
</dbReference>
<dbReference type="PIR" id="E82532">
    <property type="entry name" value="E82532"/>
</dbReference>
<dbReference type="SMR" id="Q9PA76"/>
<dbReference type="STRING" id="160492.XF_2644"/>
<dbReference type="KEGG" id="xfa:XF_2644"/>
<dbReference type="eggNOG" id="COG0462">
    <property type="taxonomic scope" value="Bacteria"/>
</dbReference>
<dbReference type="HOGENOM" id="CLU_033546_2_0_6"/>
<dbReference type="UniPathway" id="UPA00087">
    <property type="reaction ID" value="UER00172"/>
</dbReference>
<dbReference type="Proteomes" id="UP000000812">
    <property type="component" value="Chromosome"/>
</dbReference>
<dbReference type="GO" id="GO:0005737">
    <property type="term" value="C:cytoplasm"/>
    <property type="evidence" value="ECO:0007669"/>
    <property type="project" value="UniProtKB-SubCell"/>
</dbReference>
<dbReference type="GO" id="GO:0002189">
    <property type="term" value="C:ribose phosphate diphosphokinase complex"/>
    <property type="evidence" value="ECO:0007669"/>
    <property type="project" value="TreeGrafter"/>
</dbReference>
<dbReference type="GO" id="GO:0005524">
    <property type="term" value="F:ATP binding"/>
    <property type="evidence" value="ECO:0007669"/>
    <property type="project" value="UniProtKB-KW"/>
</dbReference>
<dbReference type="GO" id="GO:0016301">
    <property type="term" value="F:kinase activity"/>
    <property type="evidence" value="ECO:0007669"/>
    <property type="project" value="UniProtKB-KW"/>
</dbReference>
<dbReference type="GO" id="GO:0000287">
    <property type="term" value="F:magnesium ion binding"/>
    <property type="evidence" value="ECO:0007669"/>
    <property type="project" value="UniProtKB-UniRule"/>
</dbReference>
<dbReference type="GO" id="GO:0004749">
    <property type="term" value="F:ribose phosphate diphosphokinase activity"/>
    <property type="evidence" value="ECO:0007669"/>
    <property type="project" value="UniProtKB-UniRule"/>
</dbReference>
<dbReference type="GO" id="GO:0006015">
    <property type="term" value="P:5-phosphoribose 1-diphosphate biosynthetic process"/>
    <property type="evidence" value="ECO:0007669"/>
    <property type="project" value="UniProtKB-UniRule"/>
</dbReference>
<dbReference type="GO" id="GO:0006164">
    <property type="term" value="P:purine nucleotide biosynthetic process"/>
    <property type="evidence" value="ECO:0007669"/>
    <property type="project" value="TreeGrafter"/>
</dbReference>
<dbReference type="GO" id="GO:0009156">
    <property type="term" value="P:ribonucleoside monophosphate biosynthetic process"/>
    <property type="evidence" value="ECO:0007669"/>
    <property type="project" value="InterPro"/>
</dbReference>
<dbReference type="CDD" id="cd06223">
    <property type="entry name" value="PRTases_typeI"/>
    <property type="match status" value="1"/>
</dbReference>
<dbReference type="FunFam" id="3.40.50.2020:FF:000001">
    <property type="entry name" value="Ribose-phosphate pyrophosphokinase"/>
    <property type="match status" value="1"/>
</dbReference>
<dbReference type="Gene3D" id="3.40.50.2020">
    <property type="match status" value="2"/>
</dbReference>
<dbReference type="HAMAP" id="MF_00583_B">
    <property type="entry name" value="RibP_PPkinase_B"/>
    <property type="match status" value="1"/>
</dbReference>
<dbReference type="InterPro" id="IPR000842">
    <property type="entry name" value="PRib_PP_synth_CS"/>
</dbReference>
<dbReference type="InterPro" id="IPR029099">
    <property type="entry name" value="Pribosyltran_N"/>
</dbReference>
<dbReference type="InterPro" id="IPR000836">
    <property type="entry name" value="PRibTrfase_dom"/>
</dbReference>
<dbReference type="InterPro" id="IPR029057">
    <property type="entry name" value="PRTase-like"/>
</dbReference>
<dbReference type="InterPro" id="IPR005946">
    <property type="entry name" value="Rib-P_diPkinase"/>
</dbReference>
<dbReference type="InterPro" id="IPR037515">
    <property type="entry name" value="Rib-P_diPkinase_bac"/>
</dbReference>
<dbReference type="NCBIfam" id="NF002320">
    <property type="entry name" value="PRK01259.1"/>
    <property type="match status" value="1"/>
</dbReference>
<dbReference type="NCBIfam" id="NF003428">
    <property type="entry name" value="PRK04923.1"/>
    <property type="match status" value="1"/>
</dbReference>
<dbReference type="NCBIfam" id="TIGR01251">
    <property type="entry name" value="ribP_PPkin"/>
    <property type="match status" value="1"/>
</dbReference>
<dbReference type="PANTHER" id="PTHR10210">
    <property type="entry name" value="RIBOSE-PHOSPHATE DIPHOSPHOKINASE FAMILY MEMBER"/>
    <property type="match status" value="1"/>
</dbReference>
<dbReference type="PANTHER" id="PTHR10210:SF41">
    <property type="entry name" value="RIBOSE-PHOSPHATE PYROPHOSPHOKINASE 1, CHLOROPLASTIC"/>
    <property type="match status" value="1"/>
</dbReference>
<dbReference type="Pfam" id="PF14572">
    <property type="entry name" value="Pribosyl_synth"/>
    <property type="match status" value="1"/>
</dbReference>
<dbReference type="Pfam" id="PF13793">
    <property type="entry name" value="Pribosyltran_N"/>
    <property type="match status" value="1"/>
</dbReference>
<dbReference type="SMART" id="SM01400">
    <property type="entry name" value="Pribosyltran_N"/>
    <property type="match status" value="1"/>
</dbReference>
<dbReference type="SUPFAM" id="SSF53271">
    <property type="entry name" value="PRTase-like"/>
    <property type="match status" value="1"/>
</dbReference>
<dbReference type="PROSITE" id="PS00114">
    <property type="entry name" value="PRPP_SYNTHASE"/>
    <property type="match status" value="1"/>
</dbReference>
<accession>Q9PA76</accession>
<comment type="function">
    <text evidence="1">Involved in the biosynthesis of the central metabolite phospho-alpha-D-ribosyl-1-pyrophosphate (PRPP) via the transfer of pyrophosphoryl group from ATP to 1-hydroxyl of ribose-5-phosphate (Rib-5-P).</text>
</comment>
<comment type="catalytic activity">
    <reaction evidence="1">
        <text>D-ribose 5-phosphate + ATP = 5-phospho-alpha-D-ribose 1-diphosphate + AMP + H(+)</text>
        <dbReference type="Rhea" id="RHEA:15609"/>
        <dbReference type="ChEBI" id="CHEBI:15378"/>
        <dbReference type="ChEBI" id="CHEBI:30616"/>
        <dbReference type="ChEBI" id="CHEBI:58017"/>
        <dbReference type="ChEBI" id="CHEBI:78346"/>
        <dbReference type="ChEBI" id="CHEBI:456215"/>
        <dbReference type="EC" id="2.7.6.1"/>
    </reaction>
</comment>
<comment type="cofactor">
    <cofactor evidence="1">
        <name>Mg(2+)</name>
        <dbReference type="ChEBI" id="CHEBI:18420"/>
    </cofactor>
    <text evidence="1">Binds 2 Mg(2+) ions per subunit.</text>
</comment>
<comment type="pathway">
    <text evidence="1">Metabolic intermediate biosynthesis; 5-phospho-alpha-D-ribose 1-diphosphate biosynthesis; 5-phospho-alpha-D-ribose 1-diphosphate from D-ribose 5-phosphate (route I): step 1/1.</text>
</comment>
<comment type="subunit">
    <text evidence="1">Homohexamer.</text>
</comment>
<comment type="subcellular location">
    <subcellularLocation>
        <location evidence="1">Cytoplasm</location>
    </subcellularLocation>
</comment>
<comment type="similarity">
    <text evidence="1">Belongs to the ribose-phosphate pyrophosphokinase family. Class I subfamily.</text>
</comment>
<comment type="sequence caution" evidence="2">
    <conflict type="erroneous initiation">
        <sequence resource="EMBL-CDS" id="AAF85441"/>
    </conflict>
    <text>Truncated N-terminus.</text>
</comment>
<gene>
    <name evidence="1" type="primary">prs</name>
    <name type="ordered locus">XF_2644</name>
</gene>
<sequence>MPTIQDERNLMVFSGNANKPLTQSICKELGVRMGKSLVSRFSDGEEQVEIEESVRRQEVFVVQPTCAPSAENLMELLVIIDALKRASVSSVTAVIPYFGYSRQDRRMRSLRVPITAKVAAKMISAIGADRVLTIDLHADQIQGFFDVPVDNVYASPLLLADIWRAYGTDNLIVVSPDVGGVVRARAMAKRLGDTDLAIIDKRRPRANVATVMNIIGEVNGKTCVLVDDLVDTAGTLCAAAVALKQNGATKVVAYITHPVLSGPAVDNINNSELDELVVTDTIPLSDAARECRKIRQLSVAELLAETIRRIAFGESVSSLYVD</sequence>
<keyword id="KW-0067">ATP-binding</keyword>
<keyword id="KW-0963">Cytoplasm</keyword>
<keyword id="KW-0418">Kinase</keyword>
<keyword id="KW-0460">Magnesium</keyword>
<keyword id="KW-0479">Metal-binding</keyword>
<keyword id="KW-0545">Nucleotide biosynthesis</keyword>
<keyword id="KW-0547">Nucleotide-binding</keyword>
<keyword id="KW-0808">Transferase</keyword>
<name>KPRS_XYLFA</name>
<reference key="1">
    <citation type="journal article" date="2000" name="Nature">
        <title>The genome sequence of the plant pathogen Xylella fastidiosa.</title>
        <authorList>
            <person name="Simpson A.J.G."/>
            <person name="Reinach F.C."/>
            <person name="Arruda P."/>
            <person name="Abreu F.A."/>
            <person name="Acencio M."/>
            <person name="Alvarenga R."/>
            <person name="Alves L.M.C."/>
            <person name="Araya J.E."/>
            <person name="Baia G.S."/>
            <person name="Baptista C.S."/>
            <person name="Barros M.H."/>
            <person name="Bonaccorsi E.D."/>
            <person name="Bordin S."/>
            <person name="Bove J.M."/>
            <person name="Briones M.R.S."/>
            <person name="Bueno M.R.P."/>
            <person name="Camargo A.A."/>
            <person name="Camargo L.E.A."/>
            <person name="Carraro D.M."/>
            <person name="Carrer H."/>
            <person name="Colauto N.B."/>
            <person name="Colombo C."/>
            <person name="Costa F.F."/>
            <person name="Costa M.C.R."/>
            <person name="Costa-Neto C.M."/>
            <person name="Coutinho L.L."/>
            <person name="Cristofani M."/>
            <person name="Dias-Neto E."/>
            <person name="Docena C."/>
            <person name="El-Dorry H."/>
            <person name="Facincani A.P."/>
            <person name="Ferreira A.J.S."/>
            <person name="Ferreira V.C.A."/>
            <person name="Ferro J.A."/>
            <person name="Fraga J.S."/>
            <person name="Franca S.C."/>
            <person name="Franco M.C."/>
            <person name="Frohme M."/>
            <person name="Furlan L.R."/>
            <person name="Garnier M."/>
            <person name="Goldman G.H."/>
            <person name="Goldman M.H.S."/>
            <person name="Gomes S.L."/>
            <person name="Gruber A."/>
            <person name="Ho P.L."/>
            <person name="Hoheisel J.D."/>
            <person name="Junqueira M.L."/>
            <person name="Kemper E.L."/>
            <person name="Kitajima J.P."/>
            <person name="Krieger J.E."/>
            <person name="Kuramae E.E."/>
            <person name="Laigret F."/>
            <person name="Lambais M.R."/>
            <person name="Leite L.C.C."/>
            <person name="Lemos E.G.M."/>
            <person name="Lemos M.V.F."/>
            <person name="Lopes S.A."/>
            <person name="Lopes C.R."/>
            <person name="Machado J.A."/>
            <person name="Machado M.A."/>
            <person name="Madeira A.M.B.N."/>
            <person name="Madeira H.M.F."/>
            <person name="Marino C.L."/>
            <person name="Marques M.V."/>
            <person name="Martins E.A.L."/>
            <person name="Martins E.M.F."/>
            <person name="Matsukuma A.Y."/>
            <person name="Menck C.F.M."/>
            <person name="Miracca E.C."/>
            <person name="Miyaki C.Y."/>
            <person name="Monteiro-Vitorello C.B."/>
            <person name="Moon D.H."/>
            <person name="Nagai M.A."/>
            <person name="Nascimento A.L.T.O."/>
            <person name="Netto L.E.S."/>
            <person name="Nhani A. Jr."/>
            <person name="Nobrega F.G."/>
            <person name="Nunes L.R."/>
            <person name="Oliveira M.A."/>
            <person name="de Oliveira M.C."/>
            <person name="de Oliveira R.C."/>
            <person name="Palmieri D.A."/>
            <person name="Paris A."/>
            <person name="Peixoto B.R."/>
            <person name="Pereira G.A.G."/>
            <person name="Pereira H.A. Jr."/>
            <person name="Pesquero J.B."/>
            <person name="Quaggio R.B."/>
            <person name="Roberto P.G."/>
            <person name="Rodrigues V."/>
            <person name="de Rosa A.J.M."/>
            <person name="de Rosa V.E. Jr."/>
            <person name="de Sa R.G."/>
            <person name="Santelli R.V."/>
            <person name="Sawasaki H.E."/>
            <person name="da Silva A.C.R."/>
            <person name="da Silva A.M."/>
            <person name="da Silva F.R."/>
            <person name="Silva W.A. Jr."/>
            <person name="da Silveira J.F."/>
            <person name="Silvestri M.L.Z."/>
            <person name="Siqueira W.J."/>
            <person name="de Souza A.A."/>
            <person name="de Souza A.P."/>
            <person name="Terenzi M.F."/>
            <person name="Truffi D."/>
            <person name="Tsai S.M."/>
            <person name="Tsuhako M.H."/>
            <person name="Vallada H."/>
            <person name="Van Sluys M.A."/>
            <person name="Verjovski-Almeida S."/>
            <person name="Vettore A.L."/>
            <person name="Zago M.A."/>
            <person name="Zatz M."/>
            <person name="Meidanis J."/>
            <person name="Setubal J.C."/>
        </authorList>
    </citation>
    <scope>NUCLEOTIDE SEQUENCE [LARGE SCALE GENOMIC DNA]</scope>
    <source>
        <strain>9a5c</strain>
    </source>
</reference>
<protein>
    <recommendedName>
        <fullName evidence="1">Ribose-phosphate pyrophosphokinase</fullName>
        <shortName evidence="1">RPPK</shortName>
        <ecNumber evidence="1">2.7.6.1</ecNumber>
    </recommendedName>
    <alternativeName>
        <fullName evidence="1">5-phospho-D-ribosyl alpha-1-diphosphate synthase</fullName>
    </alternativeName>
    <alternativeName>
        <fullName evidence="1">Phosphoribosyl diphosphate synthase</fullName>
    </alternativeName>
    <alternativeName>
        <fullName evidence="1">Phosphoribosyl pyrophosphate synthase</fullName>
        <shortName evidence="1">P-Rib-PP synthase</shortName>
        <shortName evidence="1">PRPP synthase</shortName>
        <shortName evidence="1">PRPPase</shortName>
    </alternativeName>
</protein>
<proteinExistence type="inferred from homology"/>
<organism>
    <name type="scientific">Xylella fastidiosa (strain 9a5c)</name>
    <dbReference type="NCBI Taxonomy" id="160492"/>
    <lineage>
        <taxon>Bacteria</taxon>
        <taxon>Pseudomonadati</taxon>
        <taxon>Pseudomonadota</taxon>
        <taxon>Gammaproteobacteria</taxon>
        <taxon>Lysobacterales</taxon>
        <taxon>Lysobacteraceae</taxon>
        <taxon>Xylella</taxon>
    </lineage>
</organism>
<feature type="chain" id="PRO_0000141229" description="Ribose-phosphate pyrophosphokinase">
    <location>
        <begin position="1"/>
        <end position="322"/>
    </location>
</feature>
<feature type="active site" evidence="1">
    <location>
        <position position="201"/>
    </location>
</feature>
<feature type="binding site" evidence="1">
    <location>
        <begin position="43"/>
        <end position="45"/>
    </location>
    <ligand>
        <name>ATP</name>
        <dbReference type="ChEBI" id="CHEBI:30616"/>
    </ligand>
</feature>
<feature type="binding site" evidence="1">
    <location>
        <begin position="102"/>
        <end position="103"/>
    </location>
    <ligand>
        <name>ATP</name>
        <dbReference type="ChEBI" id="CHEBI:30616"/>
    </ligand>
</feature>
<feature type="binding site" evidence="1">
    <location>
        <position position="137"/>
    </location>
    <ligand>
        <name>Mg(2+)</name>
        <dbReference type="ChEBI" id="CHEBI:18420"/>
        <label>1</label>
    </ligand>
</feature>
<feature type="binding site" evidence="1">
    <location>
        <position position="177"/>
    </location>
    <ligand>
        <name>Mg(2+)</name>
        <dbReference type="ChEBI" id="CHEBI:18420"/>
        <label>2</label>
    </ligand>
</feature>
<feature type="binding site" evidence="1">
    <location>
        <position position="203"/>
    </location>
    <ligand>
        <name>D-ribose 5-phosphate</name>
        <dbReference type="ChEBI" id="CHEBI:78346"/>
    </ligand>
</feature>
<feature type="binding site" evidence="1">
    <location>
        <position position="227"/>
    </location>
    <ligand>
        <name>D-ribose 5-phosphate</name>
        <dbReference type="ChEBI" id="CHEBI:78346"/>
    </ligand>
</feature>
<feature type="binding site" evidence="1">
    <location>
        <begin position="231"/>
        <end position="235"/>
    </location>
    <ligand>
        <name>D-ribose 5-phosphate</name>
        <dbReference type="ChEBI" id="CHEBI:78346"/>
    </ligand>
</feature>